<comment type="similarity">
    <text evidence="3">Belongs to the bacterial ribosomal protein bL32 family.</text>
</comment>
<gene>
    <name type="primary">rpmF</name>
    <name type="synonym">rpl32</name>
    <name type="ordered locus">HI_0158</name>
</gene>
<dbReference type="EMBL" id="L42023">
    <property type="protein sequence ID" value="AAC21827.1"/>
    <property type="molecule type" value="Genomic_DNA"/>
</dbReference>
<dbReference type="PIR" id="G64051">
    <property type="entry name" value="G64051"/>
</dbReference>
<dbReference type="RefSeq" id="NP_438328.1">
    <property type="nucleotide sequence ID" value="NC_000907.1"/>
</dbReference>
<dbReference type="SMR" id="P44368"/>
<dbReference type="STRING" id="71421.HI_0158"/>
<dbReference type="EnsemblBacteria" id="AAC21827">
    <property type="protein sequence ID" value="AAC21827"/>
    <property type="gene ID" value="HI_0158"/>
</dbReference>
<dbReference type="KEGG" id="hin:HI_0158"/>
<dbReference type="PATRIC" id="fig|71421.8.peg.164"/>
<dbReference type="eggNOG" id="COG0333">
    <property type="taxonomic scope" value="Bacteria"/>
</dbReference>
<dbReference type="HOGENOM" id="CLU_129084_2_1_6"/>
<dbReference type="OrthoDB" id="9801927at2"/>
<dbReference type="PhylomeDB" id="P44368"/>
<dbReference type="BioCyc" id="HINF71421:G1GJ1-170-MONOMER"/>
<dbReference type="PRO" id="PR:P44368"/>
<dbReference type="Proteomes" id="UP000000579">
    <property type="component" value="Chromosome"/>
</dbReference>
<dbReference type="GO" id="GO:0022625">
    <property type="term" value="C:cytosolic large ribosomal subunit"/>
    <property type="evidence" value="ECO:0000318"/>
    <property type="project" value="GO_Central"/>
</dbReference>
<dbReference type="GO" id="GO:0003735">
    <property type="term" value="F:structural constituent of ribosome"/>
    <property type="evidence" value="ECO:0000318"/>
    <property type="project" value="GO_Central"/>
</dbReference>
<dbReference type="GO" id="GO:0006412">
    <property type="term" value="P:translation"/>
    <property type="evidence" value="ECO:0007669"/>
    <property type="project" value="UniProtKB-UniRule"/>
</dbReference>
<dbReference type="Gene3D" id="1.20.5.640">
    <property type="entry name" value="Single helix bin"/>
    <property type="match status" value="1"/>
</dbReference>
<dbReference type="HAMAP" id="MF_00340">
    <property type="entry name" value="Ribosomal_bL32"/>
    <property type="match status" value="1"/>
</dbReference>
<dbReference type="InterPro" id="IPR002677">
    <property type="entry name" value="Ribosomal_bL32"/>
</dbReference>
<dbReference type="InterPro" id="IPR044957">
    <property type="entry name" value="Ribosomal_bL32_bact"/>
</dbReference>
<dbReference type="InterPro" id="IPR011332">
    <property type="entry name" value="Ribosomal_zn-bd"/>
</dbReference>
<dbReference type="NCBIfam" id="TIGR01031">
    <property type="entry name" value="rpmF_bact"/>
    <property type="match status" value="1"/>
</dbReference>
<dbReference type="PANTHER" id="PTHR35534">
    <property type="entry name" value="50S RIBOSOMAL PROTEIN L32"/>
    <property type="match status" value="1"/>
</dbReference>
<dbReference type="PANTHER" id="PTHR35534:SF1">
    <property type="entry name" value="LARGE RIBOSOMAL SUBUNIT PROTEIN BL32"/>
    <property type="match status" value="1"/>
</dbReference>
<dbReference type="Pfam" id="PF01783">
    <property type="entry name" value="Ribosomal_L32p"/>
    <property type="match status" value="1"/>
</dbReference>
<dbReference type="SUPFAM" id="SSF57829">
    <property type="entry name" value="Zn-binding ribosomal proteins"/>
    <property type="match status" value="1"/>
</dbReference>
<keyword id="KW-1185">Reference proteome</keyword>
<keyword id="KW-0687">Ribonucleoprotein</keyword>
<keyword id="KW-0689">Ribosomal protein</keyword>
<accession>P44368</accession>
<protein>
    <recommendedName>
        <fullName evidence="3">Large ribosomal subunit protein bL32</fullName>
    </recommendedName>
    <alternativeName>
        <fullName>50S ribosomal protein L32</fullName>
    </alternativeName>
</protein>
<organism>
    <name type="scientific">Haemophilus influenzae (strain ATCC 51907 / DSM 11121 / KW20 / Rd)</name>
    <dbReference type="NCBI Taxonomy" id="71421"/>
    <lineage>
        <taxon>Bacteria</taxon>
        <taxon>Pseudomonadati</taxon>
        <taxon>Pseudomonadota</taxon>
        <taxon>Gammaproteobacteria</taxon>
        <taxon>Pasteurellales</taxon>
        <taxon>Pasteurellaceae</taxon>
        <taxon>Haemophilus</taxon>
    </lineage>
</organism>
<name>RL32_HAEIN</name>
<feature type="initiator methionine" description="Removed" evidence="1">
    <location>
        <position position="1"/>
    </location>
</feature>
<feature type="chain" id="PRO_0000172346" description="Large ribosomal subunit protein bL32">
    <location>
        <begin position="2"/>
        <end position="56"/>
    </location>
</feature>
<feature type="region of interest" description="Disordered" evidence="2">
    <location>
        <begin position="1"/>
        <end position="37"/>
    </location>
</feature>
<feature type="compositionally biased region" description="Basic residues" evidence="2">
    <location>
        <begin position="7"/>
        <end position="16"/>
    </location>
</feature>
<sequence length="56" mass="6392">MAVQQNKKSRSRRDMRRSHDALTTAAVSVDKASGETHLRHHVTADGYYRGRKVINK</sequence>
<reference key="1">
    <citation type="journal article" date="1995" name="Science">
        <title>Whole-genome random sequencing and assembly of Haemophilus influenzae Rd.</title>
        <authorList>
            <person name="Fleischmann R.D."/>
            <person name="Adams M.D."/>
            <person name="White O."/>
            <person name="Clayton R.A."/>
            <person name="Kirkness E.F."/>
            <person name="Kerlavage A.R."/>
            <person name="Bult C.J."/>
            <person name="Tomb J.-F."/>
            <person name="Dougherty B.A."/>
            <person name="Merrick J.M."/>
            <person name="McKenney K."/>
            <person name="Sutton G.G."/>
            <person name="FitzHugh W."/>
            <person name="Fields C.A."/>
            <person name="Gocayne J.D."/>
            <person name="Scott J.D."/>
            <person name="Shirley R."/>
            <person name="Liu L.-I."/>
            <person name="Glodek A."/>
            <person name="Kelley J.M."/>
            <person name="Weidman J.F."/>
            <person name="Phillips C.A."/>
            <person name="Spriggs T."/>
            <person name="Hedblom E."/>
            <person name="Cotton M.D."/>
            <person name="Utterback T.R."/>
            <person name="Hanna M.C."/>
            <person name="Nguyen D.T."/>
            <person name="Saudek D.M."/>
            <person name="Brandon R.C."/>
            <person name="Fine L.D."/>
            <person name="Fritchman J.L."/>
            <person name="Fuhrmann J.L."/>
            <person name="Geoghagen N.S.M."/>
            <person name="Gnehm C.L."/>
            <person name="McDonald L.A."/>
            <person name="Small K.V."/>
            <person name="Fraser C.M."/>
            <person name="Smith H.O."/>
            <person name="Venter J.C."/>
        </authorList>
    </citation>
    <scope>NUCLEOTIDE SEQUENCE [LARGE SCALE GENOMIC DNA]</scope>
    <source>
        <strain>ATCC 51907 / DSM 11121 / KW20 / Rd</strain>
    </source>
</reference>
<evidence type="ECO:0000250" key="1"/>
<evidence type="ECO:0000256" key="2">
    <source>
        <dbReference type="SAM" id="MobiDB-lite"/>
    </source>
</evidence>
<evidence type="ECO:0000305" key="3"/>
<proteinExistence type="inferred from homology"/>